<sequence>MSSGANITYASRKRRKPVQKTVKPIPAEGIKSNPSKRHRDRLNTELDRLASLLPFPQDVINKLDKLSVLRLSVSYLRAKSFFDVALKSTPADRNGGQDQCRAQIRDWQDLQEGEFLLQALNGFVLVVTADALVFYASSTIQDYLGFQQSDVIHQSVYELIHTEDRAEFQRQLHWALNPDSAQGVDEAHGPPQAAVYYTPDQLPPENASFMERCFRCRLRCLLDNSSGFLAMNFQGRLKYLHGQNKKGKDGALLPPQLALFAIATPLQPPSILEIRTKNFIFRTKHKLDFTPIGCDAKGQLILGYTEVELCTRGSGYQFIHAADMLHCAESHIRMIKTGESGMTVFRLFAKHSRWRWVQSNARLIYRNGRPDYIIATQRPLTDEEGREHLQKRSTSLPFMFATGEAVLYEISSPFSPIMDPLPIRTKSNTSRKDWAPQSTPSKDSFHPSSLMSALIQQDESIYLCPPSSPAPLDSHFLMGSVSKCGSWQDSFAAAGSEAALKHEQIGHAQDVNLALSGGPSELFPDNKNNDLYNIMRNLGIDFEDIRSMQNEEFFRTDSTAAGEVDFKDIDITDEILTYVQDSLNNSTLMNSACQQQPVTQHLSCMLQERLQLEQQQQLQQPPPQALEPQQQLCQMVCPQQDLGPKHTQINGTFASWNPTPPVSFNCPQQELKHYQLFSSLQGTAQEFPYKPEVDSVPYTQNFAPCNQPLLPEHSKSVQLDFPGRDFEPSLHPTTSNLDFVSCLQVPENQSHGINSQSTMVSPQAYYAGAMSMYQCQPGPQRTPVDQTQYSSEIPGSQAFLSKVQSRGIFNETYSSDLSSIGHAAQTTGHLHHLAEARPLPDITPGGFL</sequence>
<evidence type="ECO:0000250" key="1">
    <source>
        <dbReference type="UniProtKB" id="P35869"/>
    </source>
</evidence>
<evidence type="ECO:0000255" key="2">
    <source>
        <dbReference type="PROSITE-ProRule" id="PRU00140"/>
    </source>
</evidence>
<evidence type="ECO:0000255" key="3">
    <source>
        <dbReference type="PROSITE-ProRule" id="PRU00981"/>
    </source>
</evidence>
<evidence type="ECO:0000256" key="4">
    <source>
        <dbReference type="SAM" id="MobiDB-lite"/>
    </source>
</evidence>
<evidence type="ECO:0000269" key="5">
    <source>
    </source>
</evidence>
<evidence type="ECO:0000269" key="6">
    <source>
    </source>
</evidence>
<evidence type="ECO:0000269" key="7">
    <source>
    </source>
</evidence>
<evidence type="ECO:0000269" key="8">
    <source>
    </source>
</evidence>
<evidence type="ECO:0000269" key="9">
    <source>
    </source>
</evidence>
<evidence type="ECO:0000269" key="10">
    <source>
    </source>
</evidence>
<evidence type="ECO:0000269" key="11">
    <source>
    </source>
</evidence>
<evidence type="ECO:0000269" key="12">
    <source>
    </source>
</evidence>
<evidence type="ECO:0000269" key="13">
    <source>
    </source>
</evidence>
<evidence type="ECO:0000269" key="14">
    <source>
    </source>
</evidence>
<evidence type="ECO:0000269" key="15">
    <source>
    </source>
</evidence>
<evidence type="ECO:0000269" key="16">
    <source>
    </source>
</evidence>
<evidence type="ECO:0000269" key="17">
    <source>
    </source>
</evidence>
<evidence type="ECO:0000269" key="18">
    <source>
    </source>
</evidence>
<evidence type="ECO:0000269" key="19">
    <source>
    </source>
</evidence>
<evidence type="ECO:0000269" key="20">
    <source>
    </source>
</evidence>
<evidence type="ECO:0000269" key="21">
    <source>
    </source>
</evidence>
<evidence type="ECO:0000269" key="22">
    <source>
    </source>
</evidence>
<evidence type="ECO:0000269" key="23">
    <source>
    </source>
</evidence>
<evidence type="ECO:0000269" key="24">
    <source>
    </source>
</evidence>
<evidence type="ECO:0000269" key="25">
    <source ref="7"/>
</evidence>
<evidence type="ECO:0000305" key="26"/>
<evidence type="ECO:0007744" key="27">
    <source>
        <dbReference type="PDB" id="4M4X"/>
    </source>
</evidence>
<evidence type="ECO:0007744" key="28">
    <source>
        <dbReference type="PDB" id="5V0L"/>
    </source>
</evidence>
<evidence type="ECO:0007829" key="29">
    <source>
        <dbReference type="PDB" id="4M4X"/>
    </source>
</evidence>
<evidence type="ECO:0007829" key="30">
    <source>
        <dbReference type="PDB" id="8H77"/>
    </source>
</evidence>
<dbReference type="EMBL" id="D38417">
    <property type="protein sequence ID" value="BAA07469.1"/>
    <property type="molecule type" value="mRNA"/>
</dbReference>
<dbReference type="EMBL" id="M94623">
    <property type="protein sequence ID" value="AAA02896.1"/>
    <property type="molecule type" value="Unassigned_DNA"/>
</dbReference>
<dbReference type="EMBL" id="L19749">
    <property type="status" value="NOT_ANNOTATED_CDS"/>
    <property type="molecule type" value="Unassigned_DNA"/>
</dbReference>
<dbReference type="EMBL" id="L19750">
    <property type="status" value="NOT_ANNOTATED_CDS"/>
    <property type="molecule type" value="Unassigned_DNA"/>
</dbReference>
<dbReference type="EMBL" id="L19751">
    <property type="status" value="NOT_ANNOTATED_CDS"/>
    <property type="molecule type" value="Unassigned_DNA"/>
</dbReference>
<dbReference type="EMBL" id="L19752">
    <property type="status" value="NOT_ANNOTATED_CDS"/>
    <property type="molecule type" value="Unassigned_DNA"/>
</dbReference>
<dbReference type="EMBL" id="L19753">
    <property type="status" value="NOT_ANNOTATED_CDS"/>
    <property type="molecule type" value="Unassigned_DNA"/>
</dbReference>
<dbReference type="EMBL" id="L19754">
    <property type="status" value="NOT_ANNOTATED_CDS"/>
    <property type="molecule type" value="Unassigned_DNA"/>
</dbReference>
<dbReference type="EMBL" id="L19755">
    <property type="status" value="NOT_ANNOTATED_CDS"/>
    <property type="molecule type" value="Unassigned_DNA"/>
</dbReference>
<dbReference type="EMBL" id="L19756">
    <property type="status" value="NOT_ANNOTATED_CDS"/>
    <property type="molecule type" value="Unassigned_DNA"/>
</dbReference>
<dbReference type="EMBL" id="L19757">
    <property type="status" value="NOT_ANNOTATED_CDS"/>
    <property type="molecule type" value="Unassigned_DNA"/>
</dbReference>
<dbReference type="EMBL" id="L19758">
    <property type="status" value="NOT_ANNOTATED_CDS"/>
    <property type="molecule type" value="Unassigned_DNA"/>
</dbReference>
<dbReference type="EMBL" id="L19759">
    <property type="status" value="NOT_ANNOTATED_CDS"/>
    <property type="molecule type" value="Unassigned_DNA"/>
</dbReference>
<dbReference type="EMBL" id="D38416">
    <property type="status" value="NOT_ANNOTATED_CDS"/>
    <property type="molecule type" value="mRNA"/>
</dbReference>
<dbReference type="EMBL" id="AF325111">
    <property type="protein sequence ID" value="AAK13443.1"/>
    <property type="molecule type" value="Genomic_DNA"/>
</dbReference>
<dbReference type="EMBL" id="AF405560">
    <property type="protein sequence ID" value="AAL89725.1"/>
    <property type="molecule type" value="mRNA"/>
</dbReference>
<dbReference type="EMBL" id="AF405561">
    <property type="protein sequence ID" value="AAL89726.1"/>
    <property type="molecule type" value="mRNA"/>
</dbReference>
<dbReference type="EMBL" id="AF405562">
    <property type="protein sequence ID" value="AAL89727.1"/>
    <property type="molecule type" value="mRNA"/>
</dbReference>
<dbReference type="EMBL" id="AF405563">
    <property type="protein sequence ID" value="AAL89728.1"/>
    <property type="molecule type" value="mRNA"/>
</dbReference>
<dbReference type="EMBL" id="AF405566">
    <property type="protein sequence ID" value="AAL89731.1"/>
    <property type="molecule type" value="mRNA"/>
</dbReference>
<dbReference type="EMBL" id="AF405567">
    <property type="protein sequence ID" value="AAL89732.1"/>
    <property type="molecule type" value="mRNA"/>
</dbReference>
<dbReference type="EMBL" id="AF405570">
    <property type="protein sequence ID" value="AAL89735.1"/>
    <property type="molecule type" value="mRNA"/>
</dbReference>
<dbReference type="PIR" id="A46266">
    <property type="entry name" value="A46266"/>
</dbReference>
<dbReference type="RefSeq" id="NP_038492.1">
    <property type="nucleotide sequence ID" value="NM_013464.4"/>
</dbReference>
<dbReference type="PDB" id="4M4X">
    <property type="method" value="X-ray"/>
    <property type="resolution" value="2.55 A"/>
    <property type="chains" value="A/B=110-267"/>
</dbReference>
<dbReference type="PDB" id="5V0L">
    <property type="method" value="X-ray"/>
    <property type="resolution" value="4.00 A"/>
    <property type="chains" value="B=29-267"/>
</dbReference>
<dbReference type="PDB" id="7Y04">
    <property type="method" value="EM"/>
    <property type="resolution" value="3.50 A"/>
    <property type="chains" value="E=1-398"/>
</dbReference>
<dbReference type="PDB" id="8H77">
    <property type="method" value="EM"/>
    <property type="resolution" value="3.20 A"/>
    <property type="chains" value="E=1-437"/>
</dbReference>
<dbReference type="PDBsum" id="4M4X"/>
<dbReference type="PDBsum" id="5V0L"/>
<dbReference type="PDBsum" id="7Y04"/>
<dbReference type="PDBsum" id="8H77"/>
<dbReference type="EMDB" id="EMD-33537"/>
<dbReference type="EMDB" id="EMD-34519"/>
<dbReference type="SMR" id="P30561"/>
<dbReference type="BioGRID" id="198037">
    <property type="interactions" value="9"/>
</dbReference>
<dbReference type="CORUM" id="P30561"/>
<dbReference type="DIP" id="DIP-222N"/>
<dbReference type="FunCoup" id="P30561">
    <property type="interactions" value="364"/>
</dbReference>
<dbReference type="IntAct" id="P30561">
    <property type="interactions" value="8"/>
</dbReference>
<dbReference type="MINT" id="P30561"/>
<dbReference type="STRING" id="10090.ENSMUSP00000112137"/>
<dbReference type="BindingDB" id="P30561"/>
<dbReference type="ChEMBL" id="CHEMBL6099"/>
<dbReference type="GuidetoPHARMACOLOGY" id="2951"/>
<dbReference type="GlyGen" id="P30561">
    <property type="glycosylation" value="2 sites"/>
</dbReference>
<dbReference type="iPTMnet" id="P30561"/>
<dbReference type="PhosphoSitePlus" id="P30561"/>
<dbReference type="PaxDb" id="10090-ENSMUSP00000112137"/>
<dbReference type="ProteomicsDB" id="281961"/>
<dbReference type="DNASU" id="11622"/>
<dbReference type="GeneID" id="11622"/>
<dbReference type="KEGG" id="mmu:11622"/>
<dbReference type="AGR" id="MGI:105043"/>
<dbReference type="CTD" id="196"/>
<dbReference type="MGI" id="MGI:105043">
    <property type="gene designation" value="Ahr"/>
</dbReference>
<dbReference type="eggNOG" id="KOG3560">
    <property type="taxonomic scope" value="Eukaryota"/>
</dbReference>
<dbReference type="InParanoid" id="P30561"/>
<dbReference type="OrthoDB" id="6099906at2759"/>
<dbReference type="PhylomeDB" id="P30561"/>
<dbReference type="Reactome" id="R-MMU-211945">
    <property type="pathway name" value="Phase I - Functionalization of compounds"/>
</dbReference>
<dbReference type="Reactome" id="R-MMU-211976">
    <property type="pathway name" value="Endogenous sterols"/>
</dbReference>
<dbReference type="Reactome" id="R-MMU-211981">
    <property type="pathway name" value="Xenobiotics"/>
</dbReference>
<dbReference type="Reactome" id="R-MMU-8937144">
    <property type="pathway name" value="Aryl hydrocarbon receptor signalling"/>
</dbReference>
<dbReference type="BioGRID-ORCS" id="11622">
    <property type="hits" value="2 hits in 82 CRISPR screens"/>
</dbReference>
<dbReference type="ChiTaRS" id="Ahr">
    <property type="organism name" value="mouse"/>
</dbReference>
<dbReference type="EvolutionaryTrace" id="P30561"/>
<dbReference type="PRO" id="PR:P30561"/>
<dbReference type="Proteomes" id="UP000000589">
    <property type="component" value="Unplaced"/>
</dbReference>
<dbReference type="RNAct" id="P30561">
    <property type="molecule type" value="protein"/>
</dbReference>
<dbReference type="GO" id="GO:0034751">
    <property type="term" value="C:aryl hydrocarbon receptor complex"/>
    <property type="evidence" value="ECO:0000304"/>
    <property type="project" value="DFLAT"/>
</dbReference>
<dbReference type="GO" id="GO:0005737">
    <property type="term" value="C:cytoplasm"/>
    <property type="evidence" value="ECO:0000314"/>
    <property type="project" value="UniProtKB"/>
</dbReference>
<dbReference type="GO" id="GO:0005829">
    <property type="term" value="C:cytosol"/>
    <property type="evidence" value="ECO:0000314"/>
    <property type="project" value="DFLAT"/>
</dbReference>
<dbReference type="GO" id="GO:0034752">
    <property type="term" value="C:cytosolic aryl hydrocarbon receptor complex"/>
    <property type="evidence" value="ECO:0000304"/>
    <property type="project" value="DFLAT"/>
</dbReference>
<dbReference type="GO" id="GO:0034753">
    <property type="term" value="C:nuclear aryl hydrocarbon receptor complex"/>
    <property type="evidence" value="ECO:0000250"/>
    <property type="project" value="UniProtKB"/>
</dbReference>
<dbReference type="GO" id="GO:0005634">
    <property type="term" value="C:nucleus"/>
    <property type="evidence" value="ECO:0000314"/>
    <property type="project" value="UniProtKB"/>
</dbReference>
<dbReference type="GO" id="GO:0005667">
    <property type="term" value="C:transcription regulator complex"/>
    <property type="evidence" value="ECO:0000304"/>
    <property type="project" value="MGI"/>
</dbReference>
<dbReference type="GO" id="GO:0017162">
    <property type="term" value="F:aryl hydrocarbon receptor binding"/>
    <property type="evidence" value="ECO:0000353"/>
    <property type="project" value="UniProtKB"/>
</dbReference>
<dbReference type="GO" id="GO:0000987">
    <property type="term" value="F:cis-regulatory region sequence-specific DNA binding"/>
    <property type="evidence" value="ECO:0000266"/>
    <property type="project" value="MGI"/>
</dbReference>
<dbReference type="GO" id="GO:0003677">
    <property type="term" value="F:DNA binding"/>
    <property type="evidence" value="ECO:0000314"/>
    <property type="project" value="MGI"/>
</dbReference>
<dbReference type="GO" id="GO:0003700">
    <property type="term" value="F:DNA-binding transcription factor activity"/>
    <property type="evidence" value="ECO:0000314"/>
    <property type="project" value="UniProtKB"/>
</dbReference>
<dbReference type="GO" id="GO:0000981">
    <property type="term" value="F:DNA-binding transcription factor activity, RNA polymerase II-specific"/>
    <property type="evidence" value="ECO:0000314"/>
    <property type="project" value="MGI"/>
</dbReference>
<dbReference type="GO" id="GO:0070888">
    <property type="term" value="F:E-box binding"/>
    <property type="evidence" value="ECO:0000314"/>
    <property type="project" value="UniProtKB"/>
</dbReference>
<dbReference type="GO" id="GO:0051879">
    <property type="term" value="F:Hsp90 protein binding"/>
    <property type="evidence" value="ECO:0000304"/>
    <property type="project" value="DFLAT"/>
</dbReference>
<dbReference type="GO" id="GO:0042802">
    <property type="term" value="F:identical protein binding"/>
    <property type="evidence" value="ECO:0000353"/>
    <property type="project" value="MGI"/>
</dbReference>
<dbReference type="GO" id="GO:0004879">
    <property type="term" value="F:nuclear receptor activity"/>
    <property type="evidence" value="ECO:0000314"/>
    <property type="project" value="UniProtKB"/>
</dbReference>
<dbReference type="GO" id="GO:0046982">
    <property type="term" value="F:protein heterodimerization activity"/>
    <property type="evidence" value="ECO:0000314"/>
    <property type="project" value="UniProtKB"/>
</dbReference>
<dbReference type="GO" id="GO:0042803">
    <property type="term" value="F:protein homodimerization activity"/>
    <property type="evidence" value="ECO:0000314"/>
    <property type="project" value="UniProtKB"/>
</dbReference>
<dbReference type="GO" id="GO:0051087">
    <property type="term" value="F:protein-folding chaperone binding"/>
    <property type="evidence" value="ECO:0000353"/>
    <property type="project" value="UniProtKB"/>
</dbReference>
<dbReference type="GO" id="GO:0043565">
    <property type="term" value="F:sequence-specific DNA binding"/>
    <property type="evidence" value="ECO:0000314"/>
    <property type="project" value="MGI"/>
</dbReference>
<dbReference type="GO" id="GO:1990837">
    <property type="term" value="F:sequence-specific double-stranded DNA binding"/>
    <property type="evidence" value="ECO:0000314"/>
    <property type="project" value="UniProtKB"/>
</dbReference>
<dbReference type="GO" id="GO:0030183">
    <property type="term" value="P:B cell differentiation"/>
    <property type="evidence" value="ECO:0000304"/>
    <property type="project" value="DFLAT"/>
</dbReference>
<dbReference type="GO" id="GO:0001782">
    <property type="term" value="P:B cell homeostasis"/>
    <property type="evidence" value="ECO:0000315"/>
    <property type="project" value="DFLAT"/>
</dbReference>
<dbReference type="GO" id="GO:0001922">
    <property type="term" value="P:B-1 B cell homeostasis"/>
    <property type="evidence" value="ECO:0000304"/>
    <property type="project" value="DFLAT"/>
</dbReference>
<dbReference type="GO" id="GO:0008015">
    <property type="term" value="P:blood circulation"/>
    <property type="evidence" value="ECO:0000315"/>
    <property type="project" value="DFLAT"/>
</dbReference>
<dbReference type="GO" id="GO:0001568">
    <property type="term" value="P:blood vessel development"/>
    <property type="evidence" value="ECO:0000315"/>
    <property type="project" value="DFLAT"/>
</dbReference>
<dbReference type="GO" id="GO:0048514">
    <property type="term" value="P:blood vessel morphogenesis"/>
    <property type="evidence" value="ECO:0000315"/>
    <property type="project" value="DFLAT"/>
</dbReference>
<dbReference type="GO" id="GO:0001974">
    <property type="term" value="P:blood vessel remodeling"/>
    <property type="evidence" value="ECO:0000315"/>
    <property type="project" value="DFLAT"/>
</dbReference>
<dbReference type="GO" id="GO:0001569">
    <property type="term" value="P:branching involved in blood vessel morphogenesis"/>
    <property type="evidence" value="ECO:0000315"/>
    <property type="project" value="DFLAT"/>
</dbReference>
<dbReference type="GO" id="GO:0043010">
    <property type="term" value="P:camera-type eye development"/>
    <property type="evidence" value="ECO:0000315"/>
    <property type="project" value="DFLAT"/>
</dbReference>
<dbReference type="GO" id="GO:0003214">
    <property type="term" value="P:cardiac left ventricle morphogenesis"/>
    <property type="evidence" value="ECO:0000315"/>
    <property type="project" value="DFLAT"/>
</dbReference>
<dbReference type="GO" id="GO:0000902">
    <property type="term" value="P:cell morphogenesis"/>
    <property type="evidence" value="ECO:0000315"/>
    <property type="project" value="DFLAT"/>
</dbReference>
<dbReference type="GO" id="GO:1904613">
    <property type="term" value="P:cellular response to 2,3,7,8-tetrachlorodibenzodioxine"/>
    <property type="evidence" value="ECO:0000314"/>
    <property type="project" value="UniProt"/>
</dbReference>
<dbReference type="GO" id="GO:1904682">
    <property type="term" value="P:cellular response to 3-methylcholanthrene"/>
    <property type="evidence" value="ECO:0000314"/>
    <property type="project" value="UniProtKB"/>
</dbReference>
<dbReference type="GO" id="GO:0032922">
    <property type="term" value="P:circadian regulation of gene expression"/>
    <property type="evidence" value="ECO:0000314"/>
    <property type="project" value="UniProtKB"/>
</dbReference>
<dbReference type="GO" id="GO:0003243">
    <property type="term" value="P:circumferential growth involved in left ventricle morphogenesis"/>
    <property type="evidence" value="ECO:0000315"/>
    <property type="project" value="DFLAT"/>
</dbReference>
<dbReference type="GO" id="GO:0048732">
    <property type="term" value="P:gland development"/>
    <property type="evidence" value="ECO:0000315"/>
    <property type="project" value="MGI"/>
</dbReference>
<dbReference type="GO" id="GO:0072102">
    <property type="term" value="P:glomerulus morphogenesis"/>
    <property type="evidence" value="ECO:0000315"/>
    <property type="project" value="DFLAT"/>
</dbReference>
<dbReference type="GO" id="GO:0002376">
    <property type="term" value="P:immune system process"/>
    <property type="evidence" value="ECO:0000315"/>
    <property type="project" value="DFLAT"/>
</dbReference>
<dbReference type="GO" id="GO:0060993">
    <property type="term" value="P:kidney morphogenesis"/>
    <property type="evidence" value="ECO:0000315"/>
    <property type="project" value="DFLAT"/>
</dbReference>
<dbReference type="GO" id="GO:0001889">
    <property type="term" value="P:liver development"/>
    <property type="evidence" value="ECO:0000315"/>
    <property type="project" value="DFLAT"/>
</dbReference>
<dbReference type="GO" id="GO:0002260">
    <property type="term" value="P:lymphocyte homeostasis"/>
    <property type="evidence" value="ECO:0000315"/>
    <property type="project" value="DFLAT"/>
</dbReference>
<dbReference type="GO" id="GO:0045892">
    <property type="term" value="P:negative regulation of DNA-templated transcription"/>
    <property type="evidence" value="ECO:0000314"/>
    <property type="project" value="UniProtKB"/>
</dbReference>
<dbReference type="GO" id="GO:0003085">
    <property type="term" value="P:negative regulation of systemic arterial blood pressure"/>
    <property type="evidence" value="ECO:0000315"/>
    <property type="project" value="DFLAT"/>
</dbReference>
<dbReference type="GO" id="GO:0002841">
    <property type="term" value="P:negative regulation of T cell mediated immune response to tumor cell"/>
    <property type="evidence" value="ECO:0000250"/>
    <property type="project" value="UniProtKB"/>
</dbReference>
<dbReference type="GO" id="GO:0000122">
    <property type="term" value="P:negative regulation of transcription by RNA polymerase II"/>
    <property type="evidence" value="ECO:0000314"/>
    <property type="project" value="MGI"/>
</dbReference>
<dbReference type="GO" id="GO:0045906">
    <property type="term" value="P:negative regulation of vasoconstriction"/>
    <property type="evidence" value="ECO:0000315"/>
    <property type="project" value="DFLAT"/>
</dbReference>
<dbReference type="GO" id="GO:0045793">
    <property type="term" value="P:positive regulation of cell size"/>
    <property type="evidence" value="ECO:0000315"/>
    <property type="project" value="DFLAT"/>
</dbReference>
<dbReference type="GO" id="GO:0045893">
    <property type="term" value="P:positive regulation of DNA-templated transcription"/>
    <property type="evidence" value="ECO:0000314"/>
    <property type="project" value="UniProtKB"/>
</dbReference>
<dbReference type="GO" id="GO:0040010">
    <property type="term" value="P:positive regulation of growth rate"/>
    <property type="evidence" value="ECO:0000315"/>
    <property type="project" value="DFLAT"/>
</dbReference>
<dbReference type="GO" id="GO:0045899">
    <property type="term" value="P:positive regulation of RNA polymerase II transcription preinitiation complex assembly"/>
    <property type="evidence" value="ECO:0000314"/>
    <property type="project" value="MGI"/>
</dbReference>
<dbReference type="GO" id="GO:0035166">
    <property type="term" value="P:post-embryonic hemopoiesis"/>
    <property type="evidence" value="ECO:0000315"/>
    <property type="project" value="DFLAT"/>
</dbReference>
<dbReference type="GO" id="GO:0030850">
    <property type="term" value="P:prostate gland development"/>
    <property type="evidence" value="ECO:0000315"/>
    <property type="project" value="MGI"/>
</dbReference>
<dbReference type="GO" id="GO:0002819">
    <property type="term" value="P:regulation of adaptive immune response"/>
    <property type="evidence" value="ECO:0000250"/>
    <property type="project" value="UniProtKB"/>
</dbReference>
<dbReference type="GO" id="GO:0006355">
    <property type="term" value="P:regulation of DNA-templated transcription"/>
    <property type="evidence" value="ECO:0000314"/>
    <property type="project" value="UniProtKB"/>
</dbReference>
<dbReference type="GO" id="GO:0060420">
    <property type="term" value="P:regulation of heart growth"/>
    <property type="evidence" value="ECO:0000304"/>
    <property type="project" value="DFLAT"/>
</dbReference>
<dbReference type="GO" id="GO:0048608">
    <property type="term" value="P:reproductive structure development"/>
    <property type="evidence" value="ECO:0000315"/>
    <property type="project" value="MGI"/>
</dbReference>
<dbReference type="GO" id="GO:0009410">
    <property type="term" value="P:response to xenobiotic stimulus"/>
    <property type="evidence" value="ECO:0000314"/>
    <property type="project" value="UniProtKB"/>
</dbReference>
<dbReference type="GO" id="GO:0048536">
    <property type="term" value="P:spleen development"/>
    <property type="evidence" value="ECO:0000315"/>
    <property type="project" value="DFLAT"/>
</dbReference>
<dbReference type="GO" id="GO:0043029">
    <property type="term" value="P:T cell homeostasis"/>
    <property type="evidence" value="ECO:0000315"/>
    <property type="project" value="DFLAT"/>
</dbReference>
<dbReference type="GO" id="GO:0006366">
    <property type="term" value="P:transcription by RNA polymerase II"/>
    <property type="evidence" value="ECO:0000314"/>
    <property type="project" value="UniProtKB"/>
</dbReference>
<dbReference type="GO" id="GO:0001944">
    <property type="term" value="P:vasculature development"/>
    <property type="evidence" value="ECO:0000315"/>
    <property type="project" value="UniProtKB"/>
</dbReference>
<dbReference type="GO" id="GO:0006805">
    <property type="term" value="P:xenobiotic metabolic process"/>
    <property type="evidence" value="ECO:0000304"/>
    <property type="project" value="MGI"/>
</dbReference>
<dbReference type="CDD" id="cd11436">
    <property type="entry name" value="bHLH-PAS_AhR"/>
    <property type="match status" value="1"/>
</dbReference>
<dbReference type="CDD" id="cd00130">
    <property type="entry name" value="PAS"/>
    <property type="match status" value="2"/>
</dbReference>
<dbReference type="FunFam" id="3.30.450.20:FF:000035">
    <property type="entry name" value="Aryl hydrocarbon receptor"/>
    <property type="match status" value="1"/>
</dbReference>
<dbReference type="FunFam" id="3.30.450.20:FF:000019">
    <property type="entry name" value="Aryl hydrocarbon receptor 1"/>
    <property type="match status" value="1"/>
</dbReference>
<dbReference type="FunFam" id="4.10.280.10:FF:000024">
    <property type="entry name" value="Aryl hydrocarbon receptor 2"/>
    <property type="match status" value="1"/>
</dbReference>
<dbReference type="Gene3D" id="4.10.280.10">
    <property type="entry name" value="Helix-loop-helix DNA-binding domain"/>
    <property type="match status" value="1"/>
</dbReference>
<dbReference type="Gene3D" id="3.30.450.20">
    <property type="entry name" value="PAS domain"/>
    <property type="match status" value="2"/>
</dbReference>
<dbReference type="InterPro" id="IPR039091">
    <property type="entry name" value="AHR/AHRR"/>
</dbReference>
<dbReference type="InterPro" id="IPR033348">
    <property type="entry name" value="AHR_bHLH"/>
</dbReference>
<dbReference type="InterPro" id="IPR011598">
    <property type="entry name" value="bHLH_dom"/>
</dbReference>
<dbReference type="InterPro" id="IPR036638">
    <property type="entry name" value="HLH_DNA-bd_sf"/>
</dbReference>
<dbReference type="InterPro" id="IPR001610">
    <property type="entry name" value="PAC"/>
</dbReference>
<dbReference type="InterPro" id="IPR000014">
    <property type="entry name" value="PAS"/>
</dbReference>
<dbReference type="InterPro" id="IPR035965">
    <property type="entry name" value="PAS-like_dom_sf"/>
</dbReference>
<dbReference type="InterPro" id="IPR013767">
    <property type="entry name" value="PAS_fold"/>
</dbReference>
<dbReference type="InterPro" id="IPR013655">
    <property type="entry name" value="PAS_fold_3"/>
</dbReference>
<dbReference type="PANTHER" id="PTHR10649">
    <property type="entry name" value="ARYL HYDROCARBON RECEPTOR"/>
    <property type="match status" value="1"/>
</dbReference>
<dbReference type="PANTHER" id="PTHR10649:SF9">
    <property type="entry name" value="ARYL HYDROCARBON RECEPTOR"/>
    <property type="match status" value="1"/>
</dbReference>
<dbReference type="Pfam" id="PF00010">
    <property type="entry name" value="HLH"/>
    <property type="match status" value="1"/>
</dbReference>
<dbReference type="Pfam" id="PF00989">
    <property type="entry name" value="PAS"/>
    <property type="match status" value="1"/>
</dbReference>
<dbReference type="Pfam" id="PF08447">
    <property type="entry name" value="PAS_3"/>
    <property type="match status" value="1"/>
</dbReference>
<dbReference type="SMART" id="SM00353">
    <property type="entry name" value="HLH"/>
    <property type="match status" value="1"/>
</dbReference>
<dbReference type="SMART" id="SM00086">
    <property type="entry name" value="PAC"/>
    <property type="match status" value="1"/>
</dbReference>
<dbReference type="SMART" id="SM00091">
    <property type="entry name" value="PAS"/>
    <property type="match status" value="2"/>
</dbReference>
<dbReference type="SUPFAM" id="SSF47459">
    <property type="entry name" value="HLH, helix-loop-helix DNA-binding domain"/>
    <property type="match status" value="1"/>
</dbReference>
<dbReference type="SUPFAM" id="SSF55785">
    <property type="entry name" value="PYP-like sensor domain (PAS domain)"/>
    <property type="match status" value="2"/>
</dbReference>
<dbReference type="PROSITE" id="PS50888">
    <property type="entry name" value="BHLH"/>
    <property type="match status" value="1"/>
</dbReference>
<dbReference type="PROSITE" id="PS50112">
    <property type="entry name" value="PAS"/>
    <property type="match status" value="1"/>
</dbReference>
<organism>
    <name type="scientific">Mus musculus</name>
    <name type="common">Mouse</name>
    <dbReference type="NCBI Taxonomy" id="10090"/>
    <lineage>
        <taxon>Eukaryota</taxon>
        <taxon>Metazoa</taxon>
        <taxon>Chordata</taxon>
        <taxon>Craniata</taxon>
        <taxon>Vertebrata</taxon>
        <taxon>Euteleostomi</taxon>
        <taxon>Mammalia</taxon>
        <taxon>Eutheria</taxon>
        <taxon>Euarchontoglires</taxon>
        <taxon>Glires</taxon>
        <taxon>Rodentia</taxon>
        <taxon>Myomorpha</taxon>
        <taxon>Muroidea</taxon>
        <taxon>Muridae</taxon>
        <taxon>Murinae</taxon>
        <taxon>Mus</taxon>
        <taxon>Mus</taxon>
    </lineage>
</organism>
<gene>
    <name type="primary">Ahr</name>
</gene>
<protein>
    <recommendedName>
        <fullName>Aryl hydrocarbon receptor</fullName>
        <shortName>Ah receptor</shortName>
        <shortName>AhR</shortName>
    </recommendedName>
</protein>
<keyword id="KW-0002">3D-structure</keyword>
<keyword id="KW-0010">Activator</keyword>
<keyword id="KW-0013">ADP-ribosylation</keyword>
<keyword id="KW-0090">Biological rhythms</keyword>
<keyword id="KW-0131">Cell cycle</keyword>
<keyword id="KW-0963">Cytoplasm</keyword>
<keyword id="KW-0903">Direct protein sequencing</keyword>
<keyword id="KW-0238">DNA-binding</keyword>
<keyword id="KW-0539">Nucleus</keyword>
<keyword id="KW-0675">Receptor</keyword>
<keyword id="KW-1185">Reference proteome</keyword>
<keyword id="KW-0677">Repeat</keyword>
<keyword id="KW-0678">Repressor</keyword>
<keyword id="KW-0804">Transcription</keyword>
<keyword id="KW-0805">Transcription regulation</keyword>
<comment type="function">
    <text evidence="1 5 6 10 14 16 18 19 20 23 24">Ligand-activated transcription factor that enables cells to adapt to changing conditions by sensing compounds from the environment, diet, microbiome and cellular metabolism, and which plays important roles in development, immunity and cancer (PubMed:10639156, PubMed:10973493, PubMed:1314586, PubMed:33436590, PubMed:7961644, PubMed:7969080, PubMed:8806883, PubMed:9427285). Upon ligand binding, translocates into the nucleus, where it heterodimerizes with ARNT and induces transcription by binding to xenobiotic response elements (XRE) (By similarity). Regulates a variety of biological processes, including angiogenesis, hematopoiesis, drug and lipid metabolism, cell motility and immune modulation (PubMed:20106950, PubMed:28396409). Xenobiotics can act as ligands: upon xenobiotic-binding, activates the expression of multiple phase I and II xenobiotic chemical metabolizing enzyme genes (such as the CYP1A1 gene) (PubMed:10639156, PubMed:10973493, PubMed:1314586, PubMed:7961644, PubMed:7969080, PubMed:8806883, PubMed:9427285). Mediates biochemical and toxic effects of halogenated aromatic hydrocarbons (By similarity). Next to xenobiotics, natural ligands derived from plants, microbiota, and endogenous metabolism are potent AHR agonists (By similarity). Tryptophan (Trp) derivatives constitute an important class of endogenous AHR ligands (By similarity). Acts as a negative regulator of anti-tumor immunity: indoles and kynurenic acid generated by Trp catabolism act as ligand and activate AHR, thereby promoting AHR-driven cancer cell motility and suppressing adaptive immunity (By similarity). Regulates the circadian clock by inhibiting the basal and circadian expression of the core circadian component PER1 (By similarity). Inhibits PER1 by repressing the CLOCK-BMAL1 heterodimer mediated transcriptional activation of PER1 (PubMed:20106950). The heterodimer ARNT:AHR binds to core DNA sequence 5'-TGCGTG-3' within the dioxin response element (DRE) of target gene promoters and activates their transcription (PubMed:28396409).</text>
</comment>
<comment type="subunit">
    <text evidence="1 8 9 12 14 15 16">Homodimer (PubMed:24001774). Heterodimer; efficient DNA binding requires dimerization with another bHLH protein (By similarity). Interacts with ARNT; the heterodimer ARNT:AHR binds to core DNA sequence 5'-TGCGTG-3' within the dioxin response element (DRE) of target gene promoters and activates their transcription (PubMed:24001774, PubMed:28396409). Binds MYBBP1A (PubMed:11956195). Interacts with coactivators including SRC-1, RIP140 and NOCA7, and with the corepressor SMRT. Interacts with NEDD8 and IVNS1ABP (PubMed:12215427). Interacts with BMAL1 (PubMed:20106950). Interacts with HSP90AB1 (PubMed:15581363). Interacts with TIPARP; leading to mono-ADP-ribosylation of AHR and subsequent inhibition of AHR (By similarity).</text>
</comment>
<comment type="interaction">
    <interactant intactId="EBI-78863">
        <id>P30561</id>
    </interactant>
    <interactant intactId="EBI-78852">
        <id>P53762</id>
        <label>Arnt</label>
    </interactant>
    <organismsDiffer>false</organismsDiffer>
    <experiments>2</experiments>
</comment>
<comment type="interaction">
    <interactant intactId="EBI-78863">
        <id>P30561</id>
    </interactant>
    <interactant intactId="EBI-958635">
        <id>P79832</id>
        <label>arnt</label>
    </interactant>
    <organismsDiffer>true</organismsDiffer>
    <experiments>2</experiments>
</comment>
<comment type="interaction">
    <interactant intactId="EBI-78863">
        <id>P30561</id>
    </interactant>
    <interactant intactId="EBI-357067">
        <id>O94763</id>
        <label>URI1</label>
    </interactant>
    <organismsDiffer>true</organismsDiffer>
    <experiments>2</experiments>
</comment>
<comment type="subcellular location">
    <subcellularLocation>
        <location evidence="9 16">Cytoplasm</location>
    </subcellularLocation>
    <subcellularLocation>
        <location evidence="9 14 16">Nucleus</location>
    </subcellularLocation>
    <text evidence="14 16">Initially cytoplasmic; upon binding with ligand and interaction with a HSP90, it translocates to the nucleus.</text>
</comment>
<comment type="tissue specificity">
    <text evidence="5">Expressed in all tissues tested including brain, heart, kidney, liver, lung, muscle, ovary, skin, spleen and thymus.</text>
</comment>
<comment type="developmental stage">
    <text evidence="9">Between 10 dpc and 12 dpc, abundantly expressed in neuroepithelium, branchial arches, cranial nerves, liver, heart and spinal ganglia.</text>
</comment>
<comment type="induction">
    <text evidence="22">Induced or repressed by TGF-beta and dioxin in a cell-type specific fashion. Repressed by cAMP, retinoic acid, and TPA.</text>
</comment>
<comment type="domain">
    <text evidence="15">The PAS 1 domain is essential for dimerization and also required for AHR:ARNT heterodimerization.</text>
</comment>
<comment type="PTM">
    <text evidence="1">Mono-ADP-ribosylated, leading to inhibit transcription activator activity of AHR.</text>
</comment>
<comment type="polymorphism">
    <text>There are four common alleles; AHRB1; AHRB2; AHRB3 and AHRD. The sequence of AHRB2 is shown here.</text>
</comment>
<comment type="disruption phenotype">
    <text evidence="17">AHR knockdown in the retina results in reduced electroretinogram responses, thinning of the outer segment, and degeneration of photoreceptors.</text>
</comment>
<comment type="miscellaneous">
    <text evidence="9">Although it interacts with NEDD8, it does not seem to be neddylated.</text>
</comment>
<reference key="1">
    <citation type="journal article" date="1992" name="Biochem. Biophys. Res. Commun.">
        <title>cDNA cloning and structure of mouse putative Ah receptor.</title>
        <authorList>
            <person name="Ema M."/>
            <person name="Sogawa K."/>
            <person name="Watanabe N."/>
            <person name="Chujoh Y."/>
            <person name="Matsushita N."/>
            <person name="Gotoh O."/>
            <person name="Funae Y."/>
            <person name="Fujii-Kuriyama Y."/>
        </authorList>
    </citation>
    <scope>NUCLEOTIDE SEQUENCE [MRNA]</scope>
    <scope>FUNCTION</scope>
    <scope>VARIANTS ILE-324; LEU-348; LEU-471; SER-533; LEU-589 AND ALA-758</scope>
    <source>
        <strain>C57L</strain>
        <tissue>Hepatoma</tissue>
    </source>
</reference>
<reference key="2">
    <citation type="journal article" date="1992" name="Proc. Natl. Acad. Sci. U.S.A.">
        <title>Cloning of the Ah-receptor cDNA reveals a distinctive ligand-activated transcription factor.</title>
        <authorList>
            <person name="Burbach K.M."/>
            <person name="Poland A."/>
            <person name="Bradfield C.A."/>
        </authorList>
    </citation>
    <scope>NUCLEOTIDE SEQUENCE [MRNA]</scope>
    <scope>PROTEIN SEQUENCE OF 10-36; 232-261; 335-350 AND 636-646</scope>
    <scope>VARIANTS ILE-324; LEU-348; LEU-471; SER-533; LEU-589 AND ALA-758</scope>
    <source>
        <strain>C57BL/6J</strain>
        <strain>C57L</strain>
        <tissue>Liver</tissue>
    </source>
</reference>
<reference key="3">
    <citation type="journal article" date="1993" name="Pharmacogenetics">
        <title>Ten nucleotide differences, five of which cause amino acid changes, are associated with the Ah receptor locus polymorphism of C57BL/6 and DBA/2 mice.</title>
        <authorList>
            <person name="Chang C.-Y."/>
            <person name="Smith D.R."/>
            <person name="Prasad V.S."/>
            <person name="Sidman C.L."/>
            <person name="Nebert D.W."/>
            <person name="Puga A."/>
        </authorList>
    </citation>
    <scope>NUCLEOTIDE SEQUENCE</scope>
    <scope>VARIANTS ILE-324; LEU-348; VAL-375; LEU-471; SER-533; LEU-589 AND ALA-758</scope>
    <source>
        <strain>C57BL/6J</strain>
        <strain>DBA/2J</strain>
    </source>
</reference>
<reference key="4">
    <citation type="journal article" date="1993" name="J. Biol. Chem.">
        <title>Molecular characterization of the murine Ahr gene. Organization, promoter analysis, and chromosomal assignment.</title>
        <authorList>
            <person name="Schmidt J.V."/>
            <person name="Carver L.A."/>
            <person name="Bradfield C.A."/>
        </authorList>
    </citation>
    <scope>NUCLEOTIDE SEQUENCE</scope>
</reference>
<reference key="5">
    <citation type="journal article" date="1994" name="J. Biol. Chem.">
        <title>Dioxin binding activities of polymorphic forms of mouse and human arylhydrocarbon receptors.</title>
        <authorList>
            <person name="Ema M."/>
            <person name="Ohe N."/>
            <person name="Suzuki M."/>
            <person name="Mimura J."/>
            <person name="Sogawa K."/>
            <person name="Ikawa S."/>
            <person name="Fujii-Kuriyama Y."/>
        </authorList>
    </citation>
    <scope>NUCLEOTIDE SEQUENCE [MRNA]</scope>
    <scope>FUNCTION</scope>
    <scope>VARIANTS ILE-324; LEU-348; VAL-375; LEU-471; SER-533; LEU-589 AND ALA-758</scope>
    <scope>CHARACTERIZATION OF VARIANTS ILE-324; VAL-375; LEU-471; SER-533 AND LEU-589</scope>
    <source>
        <strain>C57BL/6J</strain>
        <strain>DBA/2J</strain>
        <tissue>Liver</tissue>
    </source>
</reference>
<reference key="6">
    <citation type="journal article" date="1994" name="Mol. Pharmacol.">
        <title>Analysis of the four alleles of the murine aryl hydrocarbon receptor.</title>
        <authorList>
            <person name="Poland A."/>
            <person name="Palen D."/>
            <person name="Glover E."/>
        </authorList>
    </citation>
    <scope>NUCLEOTIDE SEQUENCE</scope>
    <scope>FUNCTION</scope>
    <scope>VARIANTS ILE-324; LEU-348; VAL-375; LEU-471; SER-533; LEU-589; ALA-758; VAL-808; ASP-821 AND VAL-824</scope>
    <scope>CHARACTERIZATION OF VARIANTS LEU-348 AND VAL-375</scope>
    <source>
        <strain>C57BL/6J</strain>
    </source>
</reference>
<reference key="7">
    <citation type="submission" date="2000-11" db="EMBL/GenBank/DDBJ databases">
        <title>Mouse aryl-hydrocarbon receptor (AhR) genomic region.</title>
        <authorList>
            <person name="Hadd A.G."/>
            <person name="Nguyen L.P."/>
            <person name="Garrigues C.S."/>
            <person name="Thomas R.S."/>
            <person name="Rank D.R."/>
            <person name="Penn S.G."/>
            <person name="LaPres J.J."/>
            <person name="Roach D."/>
            <person name="Blaga I."/>
            <person name="Schneider J."/>
            <person name="Shilova K."/>
            <person name="Bradfield C.A."/>
            <person name="Jovanovich S.B."/>
        </authorList>
    </citation>
    <scope>NUCLEOTIDE SEQUENCE [GENOMIC DNA]</scope>
    <scope>VARIANTS LEU-348; VAL-375; ILE-589 AND ALA-758</scope>
    <source>
        <strain>129/SvJ</strain>
    </source>
</reference>
<reference key="8">
    <citation type="journal article" date="2002" name="Pharmacogenetics">
        <title>Sequence variation and phylogenetic history of the mouse Ahr gene.</title>
        <authorList>
            <person name="Thomas R.S."/>
            <person name="Penn S.G."/>
            <person name="Holden K."/>
            <person name="Bradfield C.A."/>
            <person name="Rank D.R."/>
        </authorList>
    </citation>
    <scope>NUCLEOTIDE SEQUENCE [MRNA]</scope>
    <scope>VARIANTS ILE-324; LEU-348; VAL-375; LEU-471; SER-533; ILE-589 AND ALA-758</scope>
    <source>
        <strain>A/J</strain>
        <strain>BALB/cBY</strain>
        <strain>C3H/HeJ</strain>
        <strain>C57BL/6J</strain>
        <strain>CBA/J</strain>
        <strain>DBA/2J</strain>
        <strain>SJL/J</strain>
    </source>
</reference>
<reference key="9">
    <citation type="journal article" date="1991" name="Mol. Pharmacol.">
        <title>Purification and N-terminal amino acid sequence of the Ah receptor from the C57BL/6J mouse.</title>
        <authorList>
            <person name="Bradfield C.A."/>
            <person name="Glover E."/>
            <person name="Poland A."/>
        </authorList>
    </citation>
    <scope>PROTEIN SEQUENCE OF 10-36</scope>
</reference>
<reference key="10">
    <citation type="journal article" date="1996" name="Arch. Biochem. Biophys.">
        <title>Differential regulation of mouse Ah receptor gene expression in cell lines of different tissue origins.</title>
        <authorList>
            <person name="FitzGerald C.T."/>
            <person name="Fernandez-Salguero P."/>
            <person name="Gonzalez F.J."/>
            <person name="Nebert D.W."/>
            <person name="Puga A."/>
        </authorList>
    </citation>
    <scope>INDUCTION</scope>
</reference>
<reference key="11">
    <citation type="journal article" date="1996" name="Toxicol. Appl. Pharmacol.">
        <title>Aryl-hydrocarbon receptor-deficient mice are resistant to 2,3,7,8-tetrachlorodibenzo-p-dioxin-induced toxicity.</title>
        <authorList>
            <person name="Fernandez-Salguero P.M."/>
            <person name="Hilbert D.M."/>
            <person name="Rudikoff S."/>
            <person name="Ward J.M."/>
            <person name="Gonzalez F.J."/>
        </authorList>
    </citation>
    <scope>FUNCTION</scope>
</reference>
<reference key="12">
    <citation type="journal article" date="1997" name="Genes Cells">
        <title>Loss of teratogenic response to 2,3,7,8-tetrachlorodibenzo-p-dioxin (TCDD) in mice lacking the Ah (dioxin) receptor.</title>
        <authorList>
            <person name="Mimura J."/>
            <person name="Yamashita K."/>
            <person name="Nakamura K."/>
            <person name="Morita M."/>
            <person name="Takagi T.N."/>
            <person name="Nakao K."/>
            <person name="Ema M."/>
            <person name="Sogawa K."/>
            <person name="Yasuda M."/>
            <person name="Katsuki M."/>
            <person name="Fujii-Kuriyama Y."/>
        </authorList>
    </citation>
    <scope>FUNCTION</scope>
</reference>
<reference key="13">
    <citation type="journal article" date="2000" name="Proc. Natl. Acad. Sci. U.S.A.">
        <title>Portosystemic shunting and persistent fetal vascular structures in aryl hydrocarbon receptor-deficient mice.</title>
        <authorList>
            <person name="Lahvis G.P."/>
            <person name="Lindell S.L."/>
            <person name="Thomas R.S."/>
            <person name="McCuskey R.S."/>
            <person name="Murphy C."/>
            <person name="Glover E."/>
            <person name="Bentz M."/>
            <person name="Southard J."/>
            <person name="Bradfield C.A."/>
        </authorList>
    </citation>
    <scope>FUNCTION</scope>
</reference>
<reference key="14">
    <citation type="journal article" date="2000" name="Proc. Natl. Acad. Sci. U.S.A.">
        <title>Benzoapyrene carcinogenicity is lost in mice lacking the aryl hydrocarbon receptor.</title>
        <authorList>
            <person name="Shimizu Y."/>
            <person name="Nakatsuru Y."/>
            <person name="Ichinose M."/>
            <person name="Takahashi Y."/>
            <person name="Kume H."/>
            <person name="Mimura J."/>
            <person name="Fujii-Kuriyama Y."/>
            <person name="Ishikawa T."/>
        </authorList>
    </citation>
    <scope>FUNCTION</scope>
    <scope>TISSUE SPECIFICITY</scope>
</reference>
<reference key="15">
    <citation type="journal article" date="2002" name="J. Biol. Chem.">
        <title>Myb-binding protein 1a augments AhR-dependent gene expression.</title>
        <authorList>
            <person name="Jones L.C."/>
            <person name="Okino S.T."/>
            <person name="Gonda T.J."/>
            <person name="Whitlock J.P. Jr."/>
        </authorList>
    </citation>
    <scope>INTERACTION WITH MYBBP1A</scope>
</reference>
<reference key="16">
    <citation type="journal article" date="2002" name="Chem. Biol. Interact.">
        <title>Role of the aryl hydrocarbon receptor in cell cycle regulation.</title>
        <authorList>
            <person name="Puga A."/>
            <person name="Xia Y."/>
            <person name="Elferink C."/>
        </authorList>
    </citation>
    <scope>REVIEW ON ROLE IN CELL CYCLE</scope>
</reference>
<reference key="17">
    <citation type="journal article" date="2002" name="J. Biol. Chem.">
        <title>Interaction with Nedd8, a ubiquitin-like protein, enhances the transcriptional activity of the aryl hydrocarbon receptor.</title>
        <authorList>
            <person name="Antenos M."/>
            <person name="Casper R.F."/>
            <person name="Brown T.J."/>
        </authorList>
    </citation>
    <scope>INTERACTION WITH NEDD8</scope>
    <scope>LACK OF NEDDYLATION</scope>
    <scope>SUBCELLULAR LOCATION</scope>
    <scope>DEVELOPMENTAL STAGE</scope>
</reference>
<reference key="18">
    <citation type="journal article" date="2004" name="Biochemistry">
        <title>Phosphorylation analysis of 90 kDa heat shock protein within the cytosolic arylhydrocarbon receptor complex.</title>
        <authorList>
            <person name="Ogiso H."/>
            <person name="Kagi N."/>
            <person name="Matsumoto E."/>
            <person name="Nishimoto M."/>
            <person name="Arai R."/>
            <person name="Shirouzu M."/>
            <person name="Mimura J."/>
            <person name="Fujii-Kuriyama Y."/>
            <person name="Yokoyama S."/>
        </authorList>
    </citation>
    <scope>INTERACTION WITH HSP90AB1</scope>
</reference>
<reference key="19">
    <citation type="journal article" date="2010" name="Toxicol. Sci.">
        <title>Disruption of CLOCK-BMAL1 transcriptional activity is responsible for aryl hydrocarbon receptor-mediated regulation of Period1 gene.</title>
        <authorList>
            <person name="Xu C.X."/>
            <person name="Krager S.L."/>
            <person name="Liao D.F."/>
            <person name="Tischkau S.A."/>
        </authorList>
    </citation>
    <scope>FUNCTION</scope>
    <scope>SUBCELLULAR LOCATION</scope>
    <scope>INTERACTION WITH BMAL1</scope>
</reference>
<reference key="20">
    <citation type="journal article" date="2018" name="Hum. Mol. Genet.">
        <title>A splicing mutation in aryl hydrocarbon receptor associated with retinitis pigmentosa.</title>
        <authorList>
            <person name="Zhou Y."/>
            <person name="Li S."/>
            <person name="Huang L."/>
            <person name="Yang Y."/>
            <person name="Zhang L."/>
            <person name="Yang M."/>
            <person name="Liu W."/>
            <person name="Ramasamy K."/>
            <person name="Jiang Z."/>
            <person name="Sundaresan P."/>
            <person name="Zhu X."/>
            <person name="Yang Z."/>
        </authorList>
    </citation>
    <scope>DISRUPTION PHENOTYPE</scope>
</reference>
<reference key="21">
    <citation type="journal article" date="2021" name="Nat. Commun.">
        <title>Lysosomal SLC46A3 modulates hepatic cytosolic copper homeostasis.</title>
        <authorList>
            <person name="Kim J.H."/>
            <person name="Matsubara T."/>
            <person name="Lee J."/>
            <person name="Fenollar-Ferrer C."/>
            <person name="Han K."/>
            <person name="Kim D."/>
            <person name="Jia S."/>
            <person name="Chang C.J."/>
            <person name="Yang H."/>
            <person name="Nagano T."/>
            <person name="Krausz K.W."/>
            <person name="Yim S.H."/>
            <person name="Gonzalez F.J."/>
        </authorList>
    </citation>
    <scope>FUNCTION</scope>
</reference>
<reference evidence="27" key="22">
    <citation type="journal article" date="2013" name="Mol. Cell. Biol.">
        <title>Structure and dimerization properties of the aryl hydrocarbon receptor PAS-A domain.</title>
        <authorList>
            <person name="Wu D."/>
            <person name="Potluri N."/>
            <person name="Kim Y."/>
            <person name="Rastinejad F."/>
        </authorList>
    </citation>
    <scope>X-RAY CRYSTALLOGRAPHY (2.55 ANGSTROMS) OF 110-267 OF HOMODIMER</scope>
    <scope>MUTAGENESIS OF GLU-112; PHE-115; LEU-116; ALA-119; LEU-120; VAL-124; PHE-260 AND ILE-262</scope>
    <scope>DOMAIN</scope>
    <scope>REGION</scope>
    <scope>SUBUNIT</scope>
    <scope>INTERACTION WITH ARNT</scope>
</reference>
<reference evidence="28" key="23">
    <citation type="journal article" date="2017" name="Proc. Natl. Acad. Sci. U.S.A.">
        <title>Structural hierarchy controlling dimerization and target DNA recognition in the AHR transcriptional complex.</title>
        <authorList>
            <person name="Seok S.H."/>
            <person name="Lee W."/>
            <person name="Jiang L."/>
            <person name="Molugu K."/>
            <person name="Zheng A."/>
            <person name="Li Y."/>
            <person name="Park S."/>
            <person name="Bradfield C.A."/>
            <person name="Xing Y."/>
        </authorList>
    </citation>
    <scope>X-RAY CRYSTALLOGRAPHY (4.00 ANGSTROMS) OF 29-267 IN COMPLEXES WITH ARNT AND DNA</scope>
    <scope>MUTAGENESIS OF ARG-39; LEU-42; ASN-43; LEU-49; LYS-65; ARG-70; PHE-115; LEU-120; PHE-134; ILE-152; LYS-238 AND LEU-240</scope>
    <scope>SUBCELLULAR LOCATION</scope>
    <scope>FUNCTION</scope>
    <scope>INTERACTION WITH ARNT</scope>
</reference>
<accession>P30561</accession>
<accession>Q8QZX6</accession>
<accession>Q8R4S3</accession>
<accession>Q99P79</accession>
<accession>Q9QVY1</accession>
<proteinExistence type="evidence at protein level"/>
<feature type="propeptide" id="PRO_0000013452" evidence="11 13">
    <location>
        <begin position="1"/>
        <end position="9"/>
    </location>
</feature>
<feature type="chain" id="PRO_0000013453" description="Aryl hydrocarbon receptor">
    <location>
        <begin position="10"/>
        <end position="848"/>
    </location>
</feature>
<feature type="domain" description="bHLH" evidence="3">
    <location>
        <begin position="26"/>
        <end position="79"/>
    </location>
</feature>
<feature type="domain" description="PAS 1" evidence="2">
    <location>
        <begin position="116"/>
        <end position="179"/>
    </location>
</feature>
<feature type="domain" description="PAS 2" evidence="2">
    <location>
        <begin position="269"/>
        <end position="336"/>
    </location>
</feature>
<feature type="domain" description="PAC">
    <location>
        <begin position="342"/>
        <end position="380"/>
    </location>
</feature>
<feature type="region of interest" description="Disordered" evidence="4">
    <location>
        <begin position="1"/>
        <end position="38"/>
    </location>
</feature>
<feature type="region of interest" description="DNA-binding" evidence="1">
    <location>
        <begin position="37"/>
        <end position="65"/>
    </location>
</feature>
<feature type="region of interest" description="Required for maintaining the overall integrity of the AHR:ARNT heterodimer and its transcriptional activity" evidence="1">
    <location>
        <begin position="49"/>
        <end position="81"/>
    </location>
</feature>
<feature type="region of interest" description="Required for maintaining the overall integrity of the AHR:ARNT heterodimer and its transcriptional activity" evidence="15">
    <location>
        <begin position="116"/>
        <end position="124"/>
    </location>
</feature>
<feature type="region of interest" description="Required for maintaining the overall integrity of the AHR:ARNT heterodimer and its transcriptional activity" evidence="15">
    <location>
        <begin position="260"/>
        <end position="262"/>
    </location>
</feature>
<feature type="region of interest" description="Disordered" evidence="4">
    <location>
        <begin position="421"/>
        <end position="449"/>
    </location>
</feature>
<feature type="short sequence motif" description="Nuclear localization signal 1" evidence="1">
    <location>
        <begin position="12"/>
        <end position="15"/>
    </location>
</feature>
<feature type="short sequence motif" description="Nuclear localization signal 2" evidence="1">
    <location>
        <begin position="36"/>
        <end position="41"/>
    </location>
</feature>
<feature type="short sequence motif" description="Nuclear export signal" evidence="1">
    <location>
        <begin position="63"/>
        <end position="71"/>
    </location>
</feature>
<feature type="compositionally biased region" description="Polar residues" evidence="4">
    <location>
        <begin position="436"/>
        <end position="449"/>
    </location>
</feature>
<feature type="sequence variant" description="In allele AHRB1; no increase in specific ligand binding." evidence="7 10 11 19 20 21">
    <original>M</original>
    <variation>I</variation>
    <location>
        <position position="324"/>
    </location>
</feature>
<feature type="sequence variant" description="In allele AHRB1 and allele AHRD; no reduction in specific ligand binding." evidence="7 10 11 19 20 21 25">
    <original>F</original>
    <variation>L</variation>
    <location>
        <position position="348"/>
    </location>
</feature>
<feature type="sequence variant" description="In allele AHRD; reduced specific ligand binding." evidence="7 19 20 21 25">
    <original>A</original>
    <variation>V</variation>
    <location>
        <position position="375"/>
    </location>
</feature>
<feature type="sequence variant" description="In allele AHRB1; no increase in specific ligand binding." evidence="7 10 11 19 20 21">
    <original>P</original>
    <variation>L</variation>
    <location>
        <position position="471"/>
    </location>
</feature>
<feature type="sequence variant" description="In allele AHRB1; no increase in specific ligand binding." evidence="7 10 11 19 20 21">
    <original>N</original>
    <variation>S</variation>
    <location>
        <position position="533"/>
    </location>
</feature>
<feature type="sequence variant" description="In allele AHRD." evidence="7 25">
    <original>M</original>
    <variation>I</variation>
    <location>
        <position position="589"/>
    </location>
</feature>
<feature type="sequence variant" description="In allele AHRB1; no increase in specific ligand binding." evidence="10 11 19 20 21">
    <original>M</original>
    <variation>L</variation>
    <location>
        <position position="589"/>
    </location>
</feature>
<feature type="sequence variant" description="In allele AHRB1 and allele AHRD." evidence="7 10 11 19 20 21 25">
    <original>T</original>
    <variation>A</variation>
    <location>
        <position position="758"/>
    </location>
</feature>
<feature type="sequence variant" description="In allele AHRB1.">
    <location>
        <begin position="806"/>
        <end position="848"/>
    </location>
</feature>
<feature type="sequence variant" description="In allele AHRB3." evidence="20">
    <original>I</original>
    <variation>V</variation>
    <location>
        <position position="808"/>
    </location>
</feature>
<feature type="sequence variant" description="In allele AHRB3." evidence="20">
    <original>G</original>
    <variation>D</variation>
    <location>
        <position position="821"/>
    </location>
</feature>
<feature type="sequence variant" description="In allele AHRB3." evidence="20">
    <original>A</original>
    <variation>V</variation>
    <location>
        <position position="824"/>
    </location>
</feature>
<feature type="sequence variant" description="In allele AHRB3.">
    <original>TPGGFL</original>
    <variation>SHLVGSCSSHARMKFIQEQDTGTVRVGHQYYFSKTFDSCI</variation>
    <location>
        <begin position="843"/>
        <end position="848"/>
    </location>
</feature>
<feature type="mutagenesis site" description="Drastically reduces the binding affinity of AHR?ARNT to dioxin response element (DRE). Impairs ligand-induced nuclear translocation of AHR." evidence="16">
    <original>R</original>
    <variation>D</variation>
    <location>
        <position position="39"/>
    </location>
</feature>
<feature type="mutagenesis site" description="Significantly reduces binding affinities of the AHR?ARNT heterodimer to DRE." evidence="16">
    <original>L</original>
    <variation>E</variation>
    <location>
        <position position="42"/>
    </location>
</feature>
<feature type="mutagenesis site" description="Reduces the binding affinity of AHR?ARNT to the DRE by more than 10-fold." evidence="16">
    <original>N</original>
    <variation>A</variation>
    <location>
        <position position="43"/>
    </location>
</feature>
<feature type="mutagenesis site" description="Reduces the AHR induction transcription activity by 50%. Increases ligand-induced nuclear translocation of AHR." evidence="16">
    <original>L</original>
    <variation>E</variation>
    <location>
        <position position="49"/>
    </location>
</feature>
<feature type="mutagenesis site" description="Reduces the binding affinity of AHR?ARNT to the DRE by more than 10-fold." evidence="16">
    <original>K</original>
    <variation>E</variation>
    <location>
        <position position="65"/>
    </location>
</feature>
<feature type="mutagenesis site" description="Drastically reduces the AHR transcription activity induction. Increases constitutive AHR nuclear translocation in the absence of ligands. Reduces binding affinity for the DRE by more than 30-fold in vitro." evidence="16">
    <original>R</original>
    <variation>D</variation>
    <location>
        <position position="70"/>
    </location>
</feature>
<feature type="mutagenesis site" description="Reduces transcription activity. Decreases interaction with ARNT." evidence="15">
    <original>E</original>
    <variation>A</variation>
    <location>
        <position position="112"/>
    </location>
</feature>
<feature type="mutagenesis site" description="Highly disrupts the dimerization ability of AHR." evidence="15">
    <original>F</original>
    <variation>A</variation>
    <location>
        <position position="115"/>
    </location>
</feature>
<feature type="mutagenesis site" description="Highly disrupts the dimerization ability of AHR. Reduces the AHR transcription factor activity induction by 50%." evidence="15 16">
    <original>F</original>
    <variation>D</variation>
    <location>
        <position position="115"/>
    </location>
</feature>
<feature type="mutagenesis site" description="Highly disrupts the dimerization ability of AHR. Reduces transcription activity. Decreases interaction with ARNT." evidence="15">
    <original>L</original>
    <variation>E</variation>
    <location>
        <position position="116"/>
    </location>
</feature>
<feature type="mutagenesis site" description="Highly disrupts the dimerization ability of AHR. Reduces transcription activity. Impairs interaction with ARNT." evidence="15">
    <original>A</original>
    <variation>D</variation>
    <location>
        <position position="119"/>
    </location>
</feature>
<feature type="mutagenesis site" description="Significantly reduces binding affinities of the AHR?ARNT heterodimer to DRE." evidence="16">
    <original>L</original>
    <variation>D</variation>
    <location>
        <position position="120"/>
    </location>
</feature>
<feature type="mutagenesis site" description="Highly disrupts the dimerization ability of AHR. Reduces transcription activity. Impairs interaction with ARNT." evidence="15">
    <original>L</original>
    <variation>E</variation>
    <location>
        <position position="120"/>
    </location>
</feature>
<feature type="mutagenesis site" description="Highly disrupts the dimerization ability of AHR. Reduces transcription activity. Impairs interaction with ARNT." evidence="15">
    <original>V</original>
    <variation>D</variation>
    <location>
        <position position="124"/>
    </location>
</feature>
<feature type="mutagenesis site" description="Reduces the AHR induction activity by ~50%. Translocates to the nucleus at a high level." evidence="16">
    <original>F</original>
    <variation>D</variation>
    <location>
        <position position="134"/>
    </location>
</feature>
<feature type="mutagenesis site" description="Completely abolished the AHR induction activity, the ligand-induced nuclear translocation of AHR, and drastically reduced DRE-binding in vitro." evidence="16">
    <original>I</original>
    <variation>D</variation>
    <location>
        <position position="152"/>
    </location>
</feature>
<feature type="mutagenesis site" description="Significantly reduces binding affinities of the AHR:ARNT heterodimer to DRE." evidence="16">
    <original>K</original>
    <variation>D</variation>
    <location>
        <position position="238"/>
    </location>
</feature>
<feature type="mutagenesis site" description="Significantly reduces binding affinities of the AHR:ARNT heterodimer to DRE." evidence="16">
    <original>L</original>
    <variation>D</variation>
    <location>
        <position position="240"/>
    </location>
</feature>
<feature type="mutagenesis site" description="Reduces transcription activity. Impairs interaction with ARNT." evidence="15">
    <original>F</original>
    <variation>D</variation>
    <location>
        <position position="260"/>
    </location>
</feature>
<feature type="mutagenesis site" description="Reduces transcription activity. Decreases interaction with ARNT." evidence="15">
    <original>I</original>
    <variation>D</variation>
    <location>
        <position position="262"/>
    </location>
</feature>
<feature type="sequence conflict" description="In Ref. 2 and 3." evidence="26" ref="2 3">
    <original>S</original>
    <variation>T</variation>
    <location>
        <position position="74"/>
    </location>
</feature>
<feature type="sequence conflict" description="In Ref. 1 and 4." evidence="26" ref="1 4">
    <original>LV</original>
    <variation>FL</variation>
    <location>
        <begin position="132"/>
        <end position="133"/>
    </location>
</feature>
<feature type="sequence conflict" description="In Ref. 1 and 4." evidence="26" ref="1 4">
    <original>QL</original>
    <variation>HV</variation>
    <location>
        <begin position="171"/>
        <end position="172"/>
    </location>
</feature>
<feature type="sequence conflict" description="In Ref. 5; D38416." evidence="26" ref="5">
    <original>H</original>
    <variation>N</variation>
    <location>
        <position position="351"/>
    </location>
</feature>
<feature type="helix" evidence="29">
    <location>
        <begin position="110"/>
        <end position="113"/>
    </location>
</feature>
<feature type="helix" evidence="29">
    <location>
        <begin position="114"/>
        <end position="119"/>
    </location>
</feature>
<feature type="strand" evidence="29">
    <location>
        <begin position="120"/>
        <end position="128"/>
    </location>
</feature>
<feature type="strand" evidence="29">
    <location>
        <begin position="131"/>
        <end position="136"/>
    </location>
</feature>
<feature type="helix" evidence="29">
    <location>
        <begin position="140"/>
        <end position="143"/>
    </location>
</feature>
<feature type="helix" evidence="29">
    <location>
        <begin position="148"/>
        <end position="151"/>
    </location>
</feature>
<feature type="helix" evidence="29">
    <location>
        <begin position="156"/>
        <end position="158"/>
    </location>
</feature>
<feature type="turn" evidence="29">
    <location>
        <begin position="162"/>
        <end position="164"/>
    </location>
</feature>
<feature type="helix" evidence="29">
    <location>
        <begin position="165"/>
        <end position="172"/>
    </location>
</feature>
<feature type="strand" evidence="29">
    <location>
        <begin position="211"/>
        <end position="219"/>
    </location>
</feature>
<feature type="strand" evidence="29">
    <location>
        <begin position="225"/>
        <end position="240"/>
    </location>
</feature>
<feature type="strand" evidence="29">
    <location>
        <begin position="256"/>
        <end position="265"/>
    </location>
</feature>
<feature type="strand" evidence="30">
    <location>
        <begin position="281"/>
        <end position="285"/>
    </location>
</feature>
<feature type="strand" evidence="30">
    <location>
        <begin position="291"/>
        <end position="294"/>
    </location>
</feature>
<feature type="helix" evidence="30">
    <location>
        <begin position="296"/>
        <end position="301"/>
    </location>
</feature>
<feature type="helix" evidence="30">
    <location>
        <begin position="306"/>
        <end position="311"/>
    </location>
</feature>
<feature type="turn" evidence="30">
    <location>
        <begin position="312"/>
        <end position="314"/>
    </location>
</feature>
<feature type="helix" evidence="30">
    <location>
        <begin position="321"/>
        <end position="324"/>
    </location>
</feature>
<feature type="turn" evidence="30">
    <location>
        <begin position="325"/>
        <end position="327"/>
    </location>
</feature>
<feature type="helix" evidence="30">
    <location>
        <begin position="328"/>
        <end position="336"/>
    </location>
</feature>
<feature type="strand" evidence="30">
    <location>
        <begin position="342"/>
        <end position="348"/>
    </location>
</feature>
<feature type="strand" evidence="30">
    <location>
        <begin position="354"/>
        <end position="365"/>
    </location>
</feature>
<feature type="strand" evidence="30">
    <location>
        <begin position="367"/>
        <end position="380"/>
    </location>
</feature>
<feature type="helix" evidence="30">
    <location>
        <begin position="382"/>
        <end position="390"/>
    </location>
</feature>
<feature type="helix" evidence="30">
    <location>
        <begin position="392"/>
        <end position="394"/>
    </location>
</feature>
<name>AHR_MOUSE</name>